<proteinExistence type="evidence at protein level"/>
<comment type="function">
    <text evidence="12 13">Required in cooperation with CD79B for initiation of the signal transduction cascade activated by binding of antigen to the B-cell antigen receptor complex (BCR) which leads to internalization of the complex, trafficking to late endosomes and antigen presentation. Also required for BCR surface expression and for efficient differentiation of pro- and pre-B-cells. Stimulates SYK autophosphorylation and activation. Binds to BLNK, bringing BLNK into proximity with SYK and allowing SYK to phosphorylate BLNK. Also interacts with and increases activity of some Src-family tyrosine kinases. Represses BCR signaling during development of immature B-cells.</text>
</comment>
<comment type="subunit">
    <text evidence="1 10">Heterodimer of alpha and beta chains; disulfide-linked. Part of the B-cell antigen receptor complex where the alpha/beta chain heterodimer is non-covalently associated with an antigen-specific membrane-bound surface immunoglobulin of two heavy chains and two light chains (PubMed:35981043). Interacts through its phosphorylated ITAM domain with the SH2 domains of SYK which stimulates SYK autophosphorylation and activation. Also interacts, when phosphorylated on Tyr-210, with the SH2 domain of BLNK/SLP65, bringing BLNK into proximity with SYK and allowing SYK to phosphorylate BLNK which is necessary for trafficking of the BCR to late endosomes. Interacts with Src-family tyrosine kinases including FYN and LYN, increasing their activity (By similarity).</text>
</comment>
<comment type="interaction">
    <interactant intactId="EBI-7797864">
        <id>P11912</id>
    </interactant>
    <interactant intactId="EBI-10827839">
        <id>Q15848</id>
        <label>ADIPOQ</label>
    </interactant>
    <organismsDiffer>false</organismsDiffer>
    <experiments>3</experiments>
</comment>
<comment type="interaction">
    <interactant intactId="EBI-7797864">
        <id>P11912</id>
    </interactant>
    <interactant intactId="EBI-11522760">
        <id>Q6RW13-2</id>
        <label>AGTRAP</label>
    </interactant>
    <organismsDiffer>false</organismsDiffer>
    <experiments>3</experiments>
</comment>
<comment type="interaction">
    <interactant intactId="EBI-7797864">
        <id>P11912</id>
    </interactant>
    <interactant intactId="EBI-13064220">
        <id>Q5BKT4</id>
        <label>ALG10</label>
    </interactant>
    <organismsDiffer>false</organismsDiffer>
    <experiments>3</experiments>
</comment>
<comment type="interaction">
    <interactant intactId="EBI-7797864">
        <id>P11912</id>
    </interactant>
    <interactant intactId="EBI-18075734">
        <id>Q5I7T1</id>
        <label>ALG10B</label>
    </interactant>
    <organismsDiffer>false</organismsDiffer>
    <experiments>3</experiments>
</comment>
<comment type="interaction">
    <interactant intactId="EBI-7797864">
        <id>P11912</id>
    </interactant>
    <interactant intactId="EBI-2848814">
        <id>Q92685</id>
        <label>ALG3</label>
    </interactant>
    <organismsDiffer>false</organismsDiffer>
    <experiments>3</experiments>
</comment>
<comment type="interaction">
    <interactant intactId="EBI-7797864">
        <id>P11912</id>
    </interactant>
    <interactant intactId="EBI-715495">
        <id>P05090</id>
        <label>APOD</label>
    </interactant>
    <organismsDiffer>false</organismsDiffer>
    <experiments>3</experiments>
</comment>
<comment type="interaction">
    <interactant intactId="EBI-7797864">
        <id>P11912</id>
    </interactant>
    <interactant intactId="EBI-745213">
        <id>P29972</id>
        <label>AQP1</label>
    </interactant>
    <organismsDiffer>false</organismsDiffer>
    <experiments>3</experiments>
</comment>
<comment type="interaction">
    <interactant intactId="EBI-7797864">
        <id>P11912</id>
    </interactant>
    <interactant intactId="EBI-2808854">
        <id>Q92482</id>
        <label>AQP3</label>
    </interactant>
    <organismsDiffer>false</organismsDiffer>
    <experiments>3</experiments>
</comment>
<comment type="interaction">
    <interactant intactId="EBI-7797864">
        <id>P11912</id>
    </interactant>
    <interactant intactId="EBI-721179">
        <id>P27449</id>
        <label>ATP6V0C</label>
    </interactant>
    <organismsDiffer>false</organismsDiffer>
    <experiments>3</experiments>
</comment>
<comment type="interaction">
    <interactant intactId="EBI-7797864">
        <id>P11912</id>
    </interactant>
    <interactant intactId="EBI-707714">
        <id>Q92843</id>
        <label>BCL2L2</label>
    </interactant>
    <organismsDiffer>false</organismsDiffer>
    <experiments>3</experiments>
</comment>
<comment type="interaction">
    <interactant intactId="EBI-7797864">
        <id>P11912</id>
    </interactant>
    <interactant intactId="EBI-749204">
        <id>O15155</id>
        <label>BET1</label>
    </interactant>
    <organismsDiffer>false</organismsDiffer>
    <experiments>3</experiments>
</comment>
<comment type="interaction">
    <interactant intactId="EBI-7797864">
        <id>P11912</id>
    </interactant>
    <interactant intactId="EBI-12244618">
        <id>Q6PL45-2</id>
        <label>BRICD5</label>
    </interactant>
    <organismsDiffer>false</organismsDiffer>
    <experiments>3</experiments>
</comment>
<comment type="interaction">
    <interactant intactId="EBI-7797864">
        <id>P11912</id>
    </interactant>
    <interactant intactId="EBI-8648738">
        <id>Q8WVV5</id>
        <label>BTN2A2</label>
    </interactant>
    <organismsDiffer>false</organismsDiffer>
    <experiments>3</experiments>
</comment>
<comment type="interaction">
    <interactant intactId="EBI-7797864">
        <id>P11912</id>
    </interactant>
    <interactant intactId="EBI-12822627">
        <id>O14523</id>
        <label>C2CD2L</label>
    </interactant>
    <organismsDiffer>false</organismsDiffer>
    <experiments>3</experiments>
</comment>
<comment type="interaction">
    <interactant intactId="EBI-7797864">
        <id>P11912</id>
    </interactant>
    <interactant intactId="EBI-12003442">
        <id>Q8WVX3-2</id>
        <label>C4orf3</label>
    </interactant>
    <organismsDiffer>false</organismsDiffer>
    <experiments>3</experiments>
</comment>
<comment type="interaction">
    <interactant intactId="EBI-7797864">
        <id>P11912</id>
    </interactant>
    <interactant intactId="EBI-9083477">
        <id>Q9P0B6</id>
        <label>CCDC167</label>
    </interactant>
    <organismsDiffer>false</organismsDiffer>
    <experiments>3</experiments>
</comment>
<comment type="interaction">
    <interactant intactId="EBI-7797864">
        <id>P11912</id>
    </interactant>
    <interactant intactId="EBI-358858">
        <id>O14735</id>
        <label>CDIPT</label>
    </interactant>
    <organismsDiffer>false</organismsDiffer>
    <experiments>3</experiments>
</comment>
<comment type="interaction">
    <interactant intactId="EBI-7797864">
        <id>P11912</id>
    </interactant>
    <interactant intactId="EBI-723889">
        <id>O95832</id>
        <label>CLDN1</label>
    </interactant>
    <organismsDiffer>false</organismsDiffer>
    <experiments>3</experiments>
</comment>
<comment type="interaction">
    <interactant intactId="EBI-7797864">
        <id>P11912</id>
    </interactant>
    <interactant intactId="EBI-6165897">
        <id>Q9NWW5</id>
        <label>CLN6</label>
    </interactant>
    <organismsDiffer>false</organismsDiffer>
    <experiments>3</experiments>
</comment>
<comment type="interaction">
    <interactant intactId="EBI-7797864">
        <id>P11912</id>
    </interactant>
    <interactant intactId="EBI-11522780">
        <id>Q96DZ9-2</id>
        <label>CMTM5</label>
    </interactant>
    <organismsDiffer>false</organismsDiffer>
    <experiments>3</experiments>
</comment>
<comment type="interaction">
    <interactant intactId="EBI-7797864">
        <id>P11912</id>
    </interactant>
    <interactant intactId="EBI-2807956">
        <id>Q96FZ5</id>
        <label>CMTM7</label>
    </interactant>
    <organismsDiffer>false</organismsDiffer>
    <experiments>3</experiments>
</comment>
<comment type="interaction">
    <interactant intactId="EBI-7797864">
        <id>P11912</id>
    </interactant>
    <interactant intactId="EBI-12172273">
        <id>O95406</id>
        <label>CNIH1</label>
    </interactant>
    <organismsDiffer>false</organismsDiffer>
    <experiments>3</experiments>
</comment>
<comment type="interaction">
    <interactant intactId="EBI-7797864">
        <id>P11912</id>
    </interactant>
    <interactant intactId="EBI-12208021">
        <id>Q8TBE1</id>
        <label>CNIH3</label>
    </interactant>
    <organismsDiffer>false</organismsDiffer>
    <experiments>3</experiments>
</comment>
<comment type="interaction">
    <interactant intactId="EBI-7797864">
        <id>P11912</id>
    </interactant>
    <interactant intactId="EBI-12211159">
        <id>P29400-2</id>
        <label>COL4A5</label>
    </interactant>
    <organismsDiffer>false</organismsDiffer>
    <experiments>3</experiments>
</comment>
<comment type="interaction">
    <interactant intactId="EBI-7797864">
        <id>P11912</id>
    </interactant>
    <interactant intactId="EBI-12019274">
        <id>Q4LDR2</id>
        <label>CTXN3</label>
    </interactant>
    <organismsDiffer>false</organismsDiffer>
    <experiments>3</experiments>
</comment>
<comment type="interaction">
    <interactant intactId="EBI-7797864">
        <id>P11912</id>
    </interactant>
    <interactant intactId="EBI-8646596">
        <id>P49447</id>
        <label>CYB561</label>
    </interactant>
    <organismsDiffer>false</organismsDiffer>
    <experiments>3</experiments>
</comment>
<comment type="interaction">
    <interactant intactId="EBI-7797864">
        <id>P11912</id>
    </interactant>
    <interactant intactId="EBI-10269179">
        <id>Q8NBI2</id>
        <label>CYB561A3</label>
    </interactant>
    <organismsDiffer>false</organismsDiffer>
    <experiments>3</experiments>
</comment>
<comment type="interaction">
    <interactant intactId="EBI-7797864">
        <id>P11912</id>
    </interactant>
    <interactant intactId="EBI-717654">
        <id>O14569</id>
        <label>CYB561D2</label>
    </interactant>
    <organismsDiffer>false</organismsDiffer>
    <experiments>3</experiments>
</comment>
<comment type="interaction">
    <interactant intactId="EBI-7797864">
        <id>P11912</id>
    </interactant>
    <interactant intactId="EBI-1058710">
        <id>O43169</id>
        <label>CYB5B</label>
    </interactant>
    <organismsDiffer>false</organismsDiffer>
    <experiments>3</experiments>
</comment>
<comment type="interaction">
    <interactant intactId="EBI-7797864">
        <id>P11912</id>
    </interactant>
    <interactant intactId="EBI-10305240">
        <id>Q9H1M4</id>
        <label>DEFB127</label>
    </interactant>
    <organismsDiffer>false</organismsDiffer>
    <experiments>3</experiments>
</comment>
<comment type="interaction">
    <interactant intactId="EBI-7797864">
        <id>P11912</id>
    </interactant>
    <interactant intactId="EBI-8645574">
        <id>Q9UPQ8</id>
        <label>DOLK</label>
    </interactant>
    <organismsDiffer>false</organismsDiffer>
    <experiments>3</experiments>
</comment>
<comment type="interaction">
    <interactant intactId="EBI-7797864">
        <id>P11912</id>
    </interactant>
    <interactant intactId="EBI-10215665">
        <id>P56851</id>
        <label>EDDM3B</label>
    </interactant>
    <organismsDiffer>false</organismsDiffer>
    <experiments>3</experiments>
</comment>
<comment type="interaction">
    <interactant intactId="EBI-7797864">
        <id>P11912</id>
    </interactant>
    <interactant intactId="EBI-2820492">
        <id>Q9BV81</id>
        <label>EMC6</label>
    </interactant>
    <organismsDiffer>false</organismsDiffer>
    <experiments>3</experiments>
</comment>
<comment type="interaction">
    <interactant intactId="EBI-7797864">
        <id>P11912</id>
    </interactant>
    <interactant intactId="EBI-4319440">
        <id>P54849</id>
        <label>EMP1</label>
    </interactant>
    <organismsDiffer>false</organismsDiffer>
    <experiments>3</experiments>
</comment>
<comment type="interaction">
    <interactant intactId="EBI-7797864">
        <id>P11912</id>
    </interactant>
    <interactant intactId="EBI-3907816">
        <id>P54852</id>
        <label>EMP3</label>
    </interactant>
    <organismsDiffer>false</organismsDiffer>
    <experiments>3</experiments>
</comment>
<comment type="interaction">
    <interactant intactId="EBI-7797864">
        <id>P11912</id>
    </interactant>
    <interactant intactId="EBI-11337888">
        <id>Q7L5A8</id>
        <label>FA2H</label>
    </interactant>
    <organismsDiffer>false</organismsDiffer>
    <experiments>3</experiments>
</comment>
<comment type="interaction">
    <interactant intactId="EBI-7797864">
        <id>P11912</id>
    </interactant>
    <interactant intactId="EBI-12118888">
        <id>Q96D05-2</id>
        <label>FAM241B</label>
    </interactant>
    <organismsDiffer>false</organismsDiffer>
    <experiments>3</experiments>
</comment>
<comment type="interaction">
    <interactant intactId="EBI-7797864">
        <id>P11912</id>
    </interactant>
    <interactant intactId="EBI-743099">
        <id>Q969F0</id>
        <label>FATE1</label>
    </interactant>
    <organismsDiffer>false</organismsDiffer>
    <experiments>6</experiments>
</comment>
<comment type="interaction">
    <interactant intactId="EBI-7797864">
        <id>P11912</id>
    </interactant>
    <interactant intactId="EBI-12142299">
        <id>Q96IV6</id>
        <label>FAXDC2</label>
    </interactant>
    <organismsDiffer>false</organismsDiffer>
    <experiments>3</experiments>
</comment>
<comment type="interaction">
    <interactant intactId="EBI-7797864">
        <id>P11912</id>
    </interactant>
    <interactant intactId="EBI-714550">
        <id>P37268</id>
        <label>FDFT1</label>
    </interactant>
    <organismsDiffer>false</organismsDiffer>
    <experiments>3</experiments>
</comment>
<comment type="interaction">
    <interactant intactId="EBI-7797864">
        <id>P11912</id>
    </interactant>
    <interactant intactId="EBI-17762181">
        <id>O14843</id>
        <label>FFAR3</label>
    </interactant>
    <organismsDiffer>false</organismsDiffer>
    <experiments>3</experiments>
</comment>
<comment type="interaction">
    <interactant intactId="EBI-7797864">
        <id>P11912</id>
    </interactant>
    <interactant intactId="EBI-724839">
        <id>Q14318</id>
        <label>FKBP8</label>
    </interactant>
    <organismsDiffer>false</organismsDiffer>
    <experiments>3</experiments>
</comment>
<comment type="interaction">
    <interactant intactId="EBI-7797864">
        <id>P11912</id>
    </interactant>
    <interactant intactId="EBI-714482">
        <id>Q9BWH2</id>
        <label>FUNDC2</label>
    </interactant>
    <organismsDiffer>false</organismsDiffer>
    <experiments>3</experiments>
</comment>
<comment type="interaction">
    <interactant intactId="EBI-7797864">
        <id>P11912</id>
    </interactant>
    <interactant intactId="EBI-12175685">
        <id>Q14802-3</id>
        <label>FXYD3</label>
    </interactant>
    <organismsDiffer>false</organismsDiffer>
    <experiments>3</experiments>
</comment>
<comment type="interaction">
    <interactant intactId="EBI-7797864">
        <id>P11912</id>
    </interactant>
    <interactant intactId="EBI-3925203">
        <id>Q8N3T1</id>
        <label>GALNT15</label>
    </interactant>
    <organismsDiffer>false</organismsDiffer>
    <experiments>3</experiments>
</comment>
<comment type="interaction">
    <interactant intactId="EBI-7797864">
        <id>P11912</id>
    </interactant>
    <interactant intactId="EBI-11991950">
        <id>Q8WWP7</id>
        <label>GIMAP1</label>
    </interactant>
    <organismsDiffer>false</organismsDiffer>
    <experiments>3</experiments>
</comment>
<comment type="interaction">
    <interactant intactId="EBI-7797864">
        <id>P11912</id>
    </interactant>
    <interactant intactId="EBI-17565645">
        <id>P08034</id>
        <label>GJB1</label>
    </interactant>
    <organismsDiffer>false</organismsDiffer>
    <experiments>3</experiments>
</comment>
<comment type="interaction">
    <interactant intactId="EBI-7797864">
        <id>P11912</id>
    </interactant>
    <interactant intactId="EBI-18076404">
        <id>O15529</id>
        <label>GPR42</label>
    </interactant>
    <organismsDiffer>false</organismsDiffer>
    <experiments>3</experiments>
</comment>
<comment type="interaction">
    <interactant intactId="EBI-7797864">
        <id>P11912</id>
    </interactant>
    <interactant intactId="EBI-18076069">
        <id>Q5VWC8</id>
        <label>HACD4</label>
    </interactant>
    <organismsDiffer>false</organismsDiffer>
    <experiments>3</experiments>
</comment>
<comment type="interaction">
    <interactant intactId="EBI-7797864">
        <id>P11912</id>
    </interactant>
    <interactant intactId="EBI-2806151">
        <id>P09601</id>
        <label>HMOX1</label>
    </interactant>
    <organismsDiffer>false</organismsDiffer>
    <experiments>3</experiments>
</comment>
<comment type="interaction">
    <interactant intactId="EBI-7797864">
        <id>P11912</id>
    </interactant>
    <interactant intactId="EBI-712096">
        <id>P30519</id>
        <label>HMOX2</label>
    </interactant>
    <organismsDiffer>false</organismsDiffer>
    <experiments>3</experiments>
</comment>
<comment type="interaction">
    <interactant intactId="EBI-7797864">
        <id>P11912</id>
    </interactant>
    <interactant intactId="EBI-1748945">
        <id>P46695</id>
        <label>IER3</label>
    </interactant>
    <organismsDiffer>false</organismsDiffer>
    <experiments>3</experiments>
</comment>
<comment type="interaction">
    <interactant intactId="EBI-7797864">
        <id>P11912</id>
    </interactant>
    <interactant intactId="EBI-8503746">
        <id>Q9Y5U4</id>
        <label>INSIG2</label>
    </interactant>
    <organismsDiffer>false</organismsDiffer>
    <experiments>3</experiments>
</comment>
<comment type="interaction">
    <interactant intactId="EBI-7797864">
        <id>P11912</id>
    </interactant>
    <interactant intactId="EBI-2568251">
        <id>P11215</id>
        <label>ITGAM</label>
    </interactant>
    <organismsDiffer>false</organismsDiffer>
    <experiments>3</experiments>
</comment>
<comment type="interaction">
    <interactant intactId="EBI-7797864">
        <id>P11912</id>
    </interactant>
    <interactant intactId="EBI-10266796">
        <id>Q8N5M9</id>
        <label>JAGN1</label>
    </interactant>
    <organismsDiffer>false</organismsDiffer>
    <experiments>3</experiments>
</comment>
<comment type="interaction">
    <interactant intactId="EBI-7797864">
        <id>P11912</id>
    </interactant>
    <interactant intactId="EBI-949174">
        <id>P07942</id>
        <label>LAMB1</label>
    </interactant>
    <organismsDiffer>false</organismsDiffer>
    <experiments>3</experiments>
</comment>
<comment type="interaction">
    <interactant intactId="EBI-7797864">
        <id>P11912</id>
    </interactant>
    <interactant intactId="EBI-750776">
        <id>O95214</id>
        <label>LEPROTL1</label>
    </interactant>
    <organismsDiffer>false</organismsDiffer>
    <experiments>3</experiments>
</comment>
<comment type="interaction">
    <interactant intactId="EBI-7797864">
        <id>P11912</id>
    </interactant>
    <interactant intactId="EBI-2820517">
        <id>Q8TAF8</id>
        <label>LHFPL5</label>
    </interactant>
    <organismsDiffer>false</organismsDiffer>
    <experiments>3</experiments>
</comment>
<comment type="interaction">
    <interactant intactId="EBI-7797864">
        <id>P11912</id>
    </interactant>
    <interactant intactId="EBI-12033434">
        <id>Q9UBY5</id>
        <label>LPAR3</label>
    </interactant>
    <organismsDiffer>false</organismsDiffer>
    <experiments>3</experiments>
</comment>
<comment type="interaction">
    <interactant intactId="EBI-7797864">
        <id>P11912</id>
    </interactant>
    <interactant intactId="EBI-12241118">
        <id>Q16873</id>
        <label>LTC4S</label>
    </interactant>
    <organismsDiffer>false</organismsDiffer>
    <experiments>3</experiments>
</comment>
<comment type="interaction">
    <interactant intactId="EBI-7797864">
        <id>P11912</id>
    </interactant>
    <interactant intactId="EBI-750078">
        <id>Q13021</id>
        <label>MALL</label>
    </interactant>
    <organismsDiffer>false</organismsDiffer>
    <experiments>3</experiments>
</comment>
<comment type="interaction">
    <interactant intactId="EBI-7797864">
        <id>P11912</id>
    </interactant>
    <interactant intactId="EBI-10317612">
        <id>Q9P0N8</id>
        <label>MARCHF2</label>
    </interactant>
    <organismsDiffer>false</organismsDiffer>
    <experiments>3</experiments>
</comment>
<comment type="interaction">
    <interactant intactId="EBI-7797864">
        <id>P11912</id>
    </interactant>
    <interactant intactId="EBI-11956541">
        <id>Q9GZY8-5</id>
        <label>MFF</label>
    </interactant>
    <organismsDiffer>false</organismsDiffer>
    <experiments>3</experiments>
</comment>
<comment type="interaction">
    <interactant intactId="EBI-7797864">
        <id>P11912</id>
    </interactant>
    <interactant intactId="EBI-17295698">
        <id>Q6NUT3-2</id>
        <label>MFSD12</label>
    </interactant>
    <organismsDiffer>false</organismsDiffer>
    <experiments>3</experiments>
</comment>
<comment type="interaction">
    <interactant intactId="EBI-7797864">
        <id>P11912</id>
    </interactant>
    <interactant intactId="EBI-3920969">
        <id>Q6N075</id>
        <label>MFSD5</label>
    </interactant>
    <organismsDiffer>false</organismsDiffer>
    <experiments>3</experiments>
</comment>
<comment type="interaction">
    <interactant intactId="EBI-7797864">
        <id>P11912</id>
    </interactant>
    <interactant intactId="EBI-2858252">
        <id>Q6ZSS7</id>
        <label>MFSD6</label>
    </interactant>
    <organismsDiffer>false</organismsDiffer>
    <experiments>3</experiments>
</comment>
<comment type="interaction">
    <interactant intactId="EBI-7797864">
        <id>P11912</id>
    </interactant>
    <interactant intactId="EBI-12866138">
        <id>A0A0C4DFN3</id>
        <label>MGLL</label>
    </interactant>
    <organismsDiffer>false</organismsDiffer>
    <experiments>3</experiments>
</comment>
<comment type="interaction">
    <interactant intactId="EBI-7797864">
        <id>P11912</id>
    </interactant>
    <interactant intactId="EBI-13349813">
        <id>Q8IY49-2</id>
        <label>MMD2</label>
    </interactant>
    <organismsDiffer>false</organismsDiffer>
    <experiments>3</experiments>
</comment>
<comment type="interaction">
    <interactant intactId="EBI-7797864">
        <id>P11912</id>
    </interactant>
    <interactant intactId="EBI-12179105">
        <id>O75425</id>
        <label>MOSPD3</label>
    </interactant>
    <organismsDiffer>false</organismsDiffer>
    <experiments>3</experiments>
</comment>
<comment type="interaction">
    <interactant intactId="EBI-7797864">
        <id>P11912</id>
    </interactant>
    <interactant intactId="EBI-12070086">
        <id>Q5J8X5</id>
        <label>MS4A13</label>
    </interactant>
    <organismsDiffer>false</organismsDiffer>
    <experiments>3</experiments>
</comment>
<comment type="interaction">
    <interactant intactId="EBI-7797864">
        <id>P11912</id>
    </interactant>
    <interactant intactId="EBI-13301517">
        <id>Q96S97</id>
        <label>MYADM</label>
    </interactant>
    <organismsDiffer>false</organismsDiffer>
    <experiments>3</experiments>
</comment>
<comment type="interaction">
    <interactant intactId="EBI-7797864">
        <id>P11912</id>
    </interactant>
    <interactant intactId="EBI-17641390">
        <id>A6NDP7</id>
        <label>MYADML2</label>
    </interactant>
    <organismsDiffer>false</organismsDiffer>
    <experiments>3</experiments>
</comment>
<comment type="interaction">
    <interactant intactId="EBI-7797864">
        <id>P11912</id>
    </interactant>
    <interactant intactId="EBI-2863634">
        <id>Q9UHE5</id>
        <label>NAT8</label>
    </interactant>
    <organismsDiffer>false</organismsDiffer>
    <experiments>3</experiments>
</comment>
<comment type="interaction">
    <interactant intactId="EBI-7797864">
        <id>P11912</id>
    </interactant>
    <interactant intactId="EBI-721517">
        <id>Q99519</id>
        <label>NEU1</label>
    </interactant>
    <organismsDiffer>false</organismsDiffer>
    <experiments>3</experiments>
</comment>
<comment type="interaction">
    <interactant intactId="EBI-7797864">
        <id>P11912</id>
    </interactant>
    <interactant intactId="EBI-10317425">
        <id>Q9NZG7</id>
        <label>NINJ2</label>
    </interactant>
    <organismsDiffer>false</organismsDiffer>
    <experiments>3</experiments>
</comment>
<comment type="interaction">
    <interactant intactId="EBI-7797864">
        <id>P11912</id>
    </interactant>
    <interactant intactId="EBI-10252783">
        <id>Q6P499</id>
        <label>NIPAL3</label>
    </interactant>
    <organismsDiffer>false</organismsDiffer>
    <experiments>3</experiments>
</comment>
<comment type="interaction">
    <interactant intactId="EBI-7797864">
        <id>P11912</id>
    </interactant>
    <interactant intactId="EBI-3919611">
        <id>Q16617</id>
        <label>NKG7</label>
    </interactant>
    <organismsDiffer>false</organismsDiffer>
    <experiments>3</experiments>
</comment>
<comment type="interaction">
    <interactant intactId="EBI-7797864">
        <id>P11912</id>
    </interactant>
    <interactant intactId="EBI-12051377">
        <id>Q8N912</id>
        <label>NRAC</label>
    </interactant>
    <organismsDiffer>false</organismsDiffer>
    <experiments>3</experiments>
</comment>
<comment type="interaction">
    <interactant intactId="EBI-7797864">
        <id>P11912</id>
    </interactant>
    <interactant intactId="EBI-11075081">
        <id>Q53FV1</id>
        <label>ORMDL2</label>
    </interactant>
    <organismsDiffer>false</organismsDiffer>
    <experiments>3</experiments>
</comment>
<comment type="interaction">
    <interactant intactId="EBI-7797864">
        <id>P11912</id>
    </interactant>
    <interactant intactId="EBI-7642372">
        <id>Q7RTS6</id>
        <label>OTOP2</label>
    </interactant>
    <organismsDiffer>false</organismsDiffer>
    <experiments>3</experiments>
</comment>
<comment type="interaction">
    <interactant intactId="EBI-7797864">
        <id>P11912</id>
    </interactant>
    <interactant intactId="EBI-12092917">
        <id>Q9UHJ9-5</id>
        <label>PGAP2</label>
    </interactant>
    <organismsDiffer>false</organismsDiffer>
    <experiments>3</experiments>
</comment>
<comment type="interaction">
    <interactant intactId="EBI-7797864">
        <id>P11912</id>
    </interactant>
    <interactant intactId="EBI-12257782">
        <id>Q99640-2</id>
        <label>PKMYT1</label>
    </interactant>
    <organismsDiffer>false</organismsDiffer>
    <experiments>3</experiments>
</comment>
<comment type="interaction">
    <interactant intactId="EBI-7797864">
        <id>P11912</id>
    </interactant>
    <interactant intactId="EBI-608347">
        <id>Q04941</id>
        <label>PLP2</label>
    </interactant>
    <organismsDiffer>false</organismsDiffer>
    <experiments>3</experiments>
</comment>
<comment type="interaction">
    <interactant intactId="EBI-7797864">
        <id>P11912</id>
    </interactant>
    <interactant intactId="EBI-11721828">
        <id>Q8IY26</id>
        <label>PLPP6</label>
    </interactant>
    <organismsDiffer>false</organismsDiffer>
    <experiments>3</experiments>
</comment>
<comment type="interaction">
    <interactant intactId="EBI-7797864">
        <id>P11912</id>
    </interactant>
    <interactant intactId="EBI-12955265">
        <id>Q96GM1</id>
        <label>PLPPR2</label>
    </interactant>
    <organismsDiffer>false</organismsDiffer>
    <experiments>3</experiments>
</comment>
<comment type="interaction">
    <interactant intactId="EBI-7797864">
        <id>P11912</id>
    </interactant>
    <interactant intactId="EBI-8652812">
        <id>P54315</id>
        <label>PNLIPRP1</label>
    </interactant>
    <organismsDiffer>false</organismsDiffer>
    <experiments>3</experiments>
</comment>
<comment type="interaction">
    <interactant intactId="EBI-7797864">
        <id>P11912</id>
    </interactant>
    <interactant intactId="EBI-14210385">
        <id>Q59EV6</id>
        <label>PPGB</label>
    </interactant>
    <organismsDiffer>false</organismsDiffer>
    <experiments>3</experiments>
</comment>
<comment type="interaction">
    <interactant intactId="EBI-7797864">
        <id>P11912</id>
    </interactant>
    <interactant intactId="EBI-2506064">
        <id>O60831</id>
        <label>PRAF2</label>
    </interactant>
    <organismsDiffer>false</organismsDiffer>
    <experiments>3</experiments>
</comment>
<comment type="interaction">
    <interactant intactId="EBI-7797864">
        <id>P11912</id>
    </interactant>
    <interactant intactId="EBI-14199621">
        <id>Q13635-3</id>
        <label>PTCH1</label>
    </interactant>
    <organismsDiffer>false</organismsDiffer>
    <experiments>3</experiments>
</comment>
<comment type="interaction">
    <interactant intactId="EBI-7797864">
        <id>P11912</id>
    </interactant>
    <interactant intactId="EBI-14065960">
        <id>Q96HR9-2</id>
        <label>REEP6</label>
    </interactant>
    <organismsDiffer>false</organismsDiffer>
    <experiments>3</experiments>
</comment>
<comment type="interaction">
    <interactant intactId="EBI-7797864">
        <id>P11912</id>
    </interactant>
    <interactant intactId="EBI-1394177">
        <id>P08100</id>
        <label>RHO</label>
    </interactant>
    <organismsDiffer>false</organismsDiffer>
    <experiments>3</experiments>
</comment>
<comment type="interaction">
    <interactant intactId="EBI-7797864">
        <id>P11912</id>
    </interactant>
    <interactant intactId="EBI-10244780">
        <id>Q5QGT7</id>
        <label>RTP2</label>
    </interactant>
    <organismsDiffer>false</organismsDiffer>
    <experiments>3</experiments>
</comment>
<comment type="interaction">
    <interactant intactId="EBI-7797864">
        <id>P11912</id>
    </interactant>
    <interactant intactId="EBI-3917235">
        <id>Q9NTJ5</id>
        <label>SACM1L</label>
    </interactant>
    <organismsDiffer>false</organismsDiffer>
    <experiments>3</experiments>
</comment>
<comment type="interaction">
    <interactant intactId="EBI-7797864">
        <id>P11912</id>
    </interactant>
    <interactant intactId="EBI-1058865">
        <id>O75396</id>
        <label>SEC22B</label>
    </interactant>
    <organismsDiffer>false</organismsDiffer>
    <experiments>3</experiments>
</comment>
<comment type="interaction">
    <interactant intactId="EBI-7797864">
        <id>P11912</id>
    </interactant>
    <interactant intactId="EBI-10329948">
        <id>Q9Y6X1</id>
        <label>SERP1</label>
    </interactant>
    <organismsDiffer>false</organismsDiffer>
    <experiments>3</experiments>
</comment>
<comment type="interaction">
    <interactant intactId="EBI-7797864">
        <id>P11912</id>
    </interactant>
    <interactant intactId="EBI-10197617">
        <id>P11686</id>
        <label>SFTPC</label>
    </interactant>
    <organismsDiffer>false</organismsDiffer>
    <experiments>3</experiments>
</comment>
<comment type="interaction">
    <interactant intactId="EBI-7797864">
        <id>P11912</id>
    </interactant>
    <interactant intactId="EBI-12808018">
        <id>Q9UKG4</id>
        <label>SLC13A4</label>
    </interactant>
    <organismsDiffer>false</organismsDiffer>
    <experiments>6</experiments>
</comment>
<comment type="interaction">
    <interactant intactId="EBI-7797864">
        <id>P11912</id>
    </interactant>
    <interactant intactId="EBI-12002412">
        <id>Q86YT5</id>
        <label>SLC13A5</label>
    </interactant>
    <organismsDiffer>false</organismsDiffer>
    <experiments>3</experiments>
</comment>
<comment type="interaction">
    <interactant intactId="EBI-7797864">
        <id>P11912</id>
    </interactant>
    <interactant intactId="EBI-17460560">
        <id>Q6ZSM3</id>
        <label>SLC16A12</label>
    </interactant>
    <organismsDiffer>false</organismsDiffer>
    <experiments>3</experiments>
</comment>
<comment type="interaction">
    <interactant intactId="EBI-7797864">
        <id>P11912</id>
    </interactant>
    <interactant intactId="EBI-12243266">
        <id>Q7RTY0</id>
        <label>SLC16A13</label>
    </interactant>
    <organismsDiffer>false</organismsDiffer>
    <experiments>3</experiments>
</comment>
<comment type="interaction">
    <interactant intactId="EBI-7797864">
        <id>P11912</id>
    </interactant>
    <interactant intactId="EBI-8644112">
        <id>Q9BRI3</id>
        <label>SLC30A2</label>
    </interactant>
    <organismsDiffer>false</organismsDiffer>
    <experiments>3</experiments>
</comment>
<comment type="interaction">
    <interactant intactId="EBI-7797864">
        <id>P11912</id>
    </interactant>
    <interactant intactId="EBI-12147661">
        <id>P78383</id>
        <label>SLC35B1</label>
    </interactant>
    <organismsDiffer>false</organismsDiffer>
    <experiments>3</experiments>
</comment>
<comment type="interaction">
    <interactant intactId="EBI-7797864">
        <id>P11912</id>
    </interactant>
    <interactant intactId="EBI-10281213">
        <id>Q969S0</id>
        <label>SLC35B4</label>
    </interactant>
    <organismsDiffer>false</organismsDiffer>
    <experiments>3</experiments>
</comment>
<comment type="interaction">
    <interactant intactId="EBI-7797864">
        <id>P11912</id>
    </interactant>
    <interactant intactId="EBI-9978441">
        <id>Q9H2H9</id>
        <label>SLC38A1</label>
    </interactant>
    <organismsDiffer>false</organismsDiffer>
    <experiments>6</experiments>
</comment>
<comment type="interaction">
    <interactant intactId="EBI-7797864">
        <id>P11912</id>
    </interactant>
    <interactant intactId="EBI-12898013">
        <id>Q9NP94</id>
        <label>SLC39A2</label>
    </interactant>
    <organismsDiffer>false</organismsDiffer>
    <experiments>3</experiments>
</comment>
<comment type="interaction">
    <interactant intactId="EBI-7797864">
        <id>P11912</id>
    </interactant>
    <interactant intactId="EBI-2823239">
        <id>Q9NUM3</id>
        <label>SLC39A9</label>
    </interactant>
    <organismsDiffer>false</organismsDiffer>
    <experiments>3</experiments>
</comment>
<comment type="interaction">
    <interactant intactId="EBI-7797864">
        <id>P11912</id>
    </interactant>
    <interactant intactId="EBI-12266234">
        <id>Q8IVJ1</id>
        <label>SLC41A1</label>
    </interactant>
    <organismsDiffer>false</organismsDiffer>
    <experiments>3</experiments>
</comment>
<comment type="interaction">
    <interactant intactId="EBI-7797864">
        <id>P11912</id>
    </interactant>
    <interactant intactId="EBI-10290130">
        <id>Q96JW4</id>
        <label>SLC41A2</label>
    </interactant>
    <organismsDiffer>false</organismsDiffer>
    <experiments>3</experiments>
</comment>
<comment type="interaction">
    <interactant intactId="EBI-7797864">
        <id>P11912</id>
    </interactant>
    <interactant intactId="EBI-18074862">
        <id>Q7Z3Q1-2</id>
        <label>SLC46A3</label>
    </interactant>
    <organismsDiffer>false</organismsDiffer>
    <experiments>3</experiments>
</comment>
<comment type="interaction">
    <interactant intactId="EBI-7797864">
        <id>P11912</id>
    </interactant>
    <interactant intactId="EBI-3907610">
        <id>Q8N2U9</id>
        <label>SLC66A2</label>
    </interactant>
    <organismsDiffer>false</organismsDiffer>
    <experiments>3</experiments>
</comment>
<comment type="interaction">
    <interactant intactId="EBI-7797864">
        <id>P11912</id>
    </interactant>
    <interactant intactId="EBI-3843589">
        <id>P48065</id>
        <label>SLC6A12</label>
    </interactant>
    <organismsDiffer>false</organismsDiffer>
    <experiments>3</experiments>
</comment>
<comment type="interaction">
    <interactant intactId="EBI-7797864">
        <id>P11912</id>
    </interactant>
    <interactant intactId="EBI-4289564">
        <id>P30825</id>
        <label>SLC7A1</label>
    </interactant>
    <organismsDiffer>false</organismsDiffer>
    <experiments>3</experiments>
</comment>
<comment type="interaction">
    <interactant intactId="EBI-7797864">
        <id>P11912</id>
    </interactant>
    <interactant intactId="EBI-8640191">
        <id>Q9NRQ5</id>
        <label>SMCO4</label>
    </interactant>
    <organismsDiffer>false</organismsDiffer>
    <experiments>3</experiments>
</comment>
<comment type="interaction">
    <interactant intactId="EBI-7797864">
        <id>P11912</id>
    </interactant>
    <interactant intactId="EBI-741850">
        <id>Q9BZL3</id>
        <label>SMIM3</label>
    </interactant>
    <organismsDiffer>false</organismsDiffer>
    <experiments>3</experiments>
</comment>
<comment type="interaction">
    <interactant intactId="EBI-7797864">
        <id>P11912</id>
    </interactant>
    <interactant intactId="EBI-12200293">
        <id>P0DN84</id>
        <label>STRIT1</label>
    </interactant>
    <organismsDiffer>false</organismsDiffer>
    <experiments>3</experiments>
</comment>
<comment type="interaction">
    <interactant intactId="EBI-7797864">
        <id>P11912</id>
    </interactant>
    <interactant intactId="EBI-2691717">
        <id>Q86Y82</id>
        <label>STX12</label>
    </interactant>
    <organismsDiffer>false</organismsDiffer>
    <experiments>3</experiments>
</comment>
<comment type="interaction">
    <interactant intactId="EBI-7797864">
        <id>P11912</id>
    </interactant>
    <interactant intactId="EBI-1394295">
        <id>Q13277</id>
        <label>STX3</label>
    </interactant>
    <organismsDiffer>false</organismsDiffer>
    <experiments>3</experiments>
</comment>
<comment type="interaction">
    <interactant intactId="EBI-7797864">
        <id>P11912</id>
    </interactant>
    <interactant intactId="EBI-727240">
        <id>Q9UNK0</id>
        <label>STX8</label>
    </interactant>
    <organismsDiffer>false</organismsDiffer>
    <experiments>3</experiments>
</comment>
<comment type="interaction">
    <interactant intactId="EBI-7797864">
        <id>P11912</id>
    </interactant>
    <interactant intactId="EBI-1049004">
        <id>P57105</id>
        <label>SYNJ2BP</label>
    </interactant>
    <organismsDiffer>false</organismsDiffer>
    <experiments>3</experiments>
</comment>
<comment type="interaction">
    <interactant intactId="EBI-7797864">
        <id>P11912</id>
    </interactant>
    <interactant intactId="EBI-2877718">
        <id>Q9NZ01</id>
        <label>TECR</label>
    </interactant>
    <organismsDiffer>false</organismsDiffer>
    <experiments>3</experiments>
</comment>
<comment type="interaction">
    <interactant intactId="EBI-7797864">
        <id>P11912</id>
    </interactant>
    <interactant intactId="EBI-941422">
        <id>P07204</id>
        <label>THBD</label>
    </interactant>
    <organismsDiffer>false</organismsDiffer>
    <experiments>3</experiments>
</comment>
<comment type="interaction">
    <interactant intactId="EBI-7797864">
        <id>P11912</id>
    </interactant>
    <interactant intactId="EBI-6448756">
        <id>Q96DZ7</id>
        <label>TM4SF19</label>
    </interactant>
    <organismsDiffer>false</organismsDiffer>
    <experiments>3</experiments>
</comment>
<comment type="interaction">
    <interactant intactId="EBI-7797864">
        <id>P11912</id>
    </interactant>
    <interactant intactId="EBI-8650934">
        <id>P48230</id>
        <label>TM4SF4</label>
    </interactant>
    <organismsDiffer>false</organismsDiffer>
    <experiments>3</experiments>
</comment>
<comment type="interaction">
    <interactant intactId="EBI-7797864">
        <id>P11912</id>
    </interactant>
    <interactant intactId="EBI-1045825">
        <id>P55061</id>
        <label>TMBIM6</label>
    </interactant>
    <organismsDiffer>false</organismsDiffer>
    <experiments>3</experiments>
</comment>
<comment type="interaction">
    <interactant intactId="EBI-7797864">
        <id>P11912</id>
    </interactant>
    <interactant intactId="EBI-12845616">
        <id>Q6UX40</id>
        <label>TMEM107</label>
    </interactant>
    <organismsDiffer>false</organismsDiffer>
    <experiments>3</experiments>
</comment>
<comment type="interaction">
    <interactant intactId="EBI-7797864">
        <id>P11912</id>
    </interactant>
    <interactant intactId="EBI-723946">
        <id>P17152</id>
        <label>TMEM11</label>
    </interactant>
    <organismsDiffer>false</organismsDiffer>
    <experiments>3</experiments>
</comment>
<comment type="interaction">
    <interactant intactId="EBI-7797864">
        <id>P11912</id>
    </interactant>
    <interactant intactId="EBI-10694905">
        <id>Q5BJH2-2</id>
        <label>TMEM128</label>
    </interactant>
    <organismsDiffer>false</organismsDiffer>
    <experiments>3</experiments>
</comment>
<comment type="interaction">
    <interactant intactId="EBI-7797864">
        <id>P11912</id>
    </interactant>
    <interactant intactId="EBI-2844246">
        <id>Q9NV12</id>
        <label>TMEM140</label>
    </interactant>
    <organismsDiffer>false</organismsDiffer>
    <experiments>3</experiments>
</comment>
<comment type="interaction">
    <interactant intactId="EBI-7797864">
        <id>P11912</id>
    </interactant>
    <interactant intactId="EBI-348587">
        <id>Q9BVK8</id>
        <label>TMEM147</label>
    </interactant>
    <organismsDiffer>false</organismsDiffer>
    <experiments>3</experiments>
</comment>
<comment type="interaction">
    <interactant intactId="EBI-7797864">
        <id>P11912</id>
    </interactant>
    <interactant intactId="EBI-8638294">
        <id>Q9NUH8</id>
        <label>TMEM14B</label>
    </interactant>
    <organismsDiffer>false</organismsDiffer>
    <experiments>3</experiments>
</comment>
<comment type="interaction">
    <interactant intactId="EBI-7797864">
        <id>P11912</id>
    </interactant>
    <interactant intactId="EBI-2800645">
        <id>Q96HP8</id>
        <label>TMEM176A</label>
    </interactant>
    <organismsDiffer>false</organismsDiffer>
    <experiments>3</experiments>
</comment>
<comment type="interaction">
    <interactant intactId="EBI-7797864">
        <id>P11912</id>
    </interactant>
    <interactant intactId="EBI-13046724">
        <id>Q14656</id>
        <label>TMEM187</label>
    </interactant>
    <organismsDiffer>false</organismsDiffer>
    <experiments>3</experiments>
</comment>
<comment type="interaction">
    <interactant intactId="EBI-7797864">
        <id>P11912</id>
    </interactant>
    <interactant intactId="EBI-741829">
        <id>Q96HH6</id>
        <label>TMEM19</label>
    </interactant>
    <organismsDiffer>false</organismsDiffer>
    <experiments>3</experiments>
</comment>
<comment type="interaction">
    <interactant intactId="EBI-7797864">
        <id>P11912</id>
    </interactant>
    <interactant intactId="EBI-10173151">
        <id>A2RU14</id>
        <label>TMEM218</label>
    </interactant>
    <organismsDiffer>false</organismsDiffer>
    <experiments>3</experiments>
</comment>
<comment type="interaction">
    <interactant intactId="EBI-7797864">
        <id>P11912</id>
    </interactant>
    <interactant intactId="EBI-347385">
        <id>Q9H0R3</id>
        <label>TMEM222</label>
    </interactant>
    <organismsDiffer>false</organismsDiffer>
    <experiments>3</experiments>
</comment>
<comment type="interaction">
    <interactant intactId="EBI-7797864">
        <id>P11912</id>
    </interactant>
    <interactant intactId="EBI-12195227">
        <id>Q8NBD8</id>
        <label>TMEM229B</label>
    </interactant>
    <organismsDiffer>false</organismsDiffer>
    <experiments>3</experiments>
</comment>
<comment type="interaction">
    <interactant intactId="EBI-7797864">
        <id>P11912</id>
    </interactant>
    <interactant intactId="EBI-11528917">
        <id>Q8WW34-2</id>
        <label>TMEM239</label>
    </interactant>
    <organismsDiffer>false</organismsDiffer>
    <experiments>3</experiments>
</comment>
<comment type="interaction">
    <interactant intactId="EBI-7797864">
        <id>P11912</id>
    </interactant>
    <interactant intactId="EBI-12887458">
        <id>Q9BU79</id>
        <label>TMEM243</label>
    </interactant>
    <organismsDiffer>false</organismsDiffer>
    <experiments>3</experiments>
</comment>
<comment type="interaction">
    <interactant intactId="EBI-7797864">
        <id>P11912</id>
    </interactant>
    <interactant intactId="EBI-11956809">
        <id>Q8TBM7</id>
        <label>TMEM254</label>
    </interactant>
    <organismsDiffer>false</organismsDiffer>
    <experiments>3</experiments>
</comment>
<comment type="interaction">
    <interactant intactId="EBI-7797864">
        <id>P11912</id>
    </interactant>
    <interactant intactId="EBI-17180389">
        <id>E9PQX1</id>
        <label>TMEM262</label>
    </interactant>
    <organismsDiffer>false</organismsDiffer>
    <experiments>3</experiments>
</comment>
<comment type="interaction">
    <interactant intactId="EBI-7797864">
        <id>P11912</id>
    </interactant>
    <interactant intactId="EBI-12038591">
        <id>Q69YG0</id>
        <label>TMEM42</label>
    </interactant>
    <organismsDiffer>false</organismsDiffer>
    <experiments>3</experiments>
</comment>
<comment type="interaction">
    <interactant intactId="EBI-7797864">
        <id>P11912</id>
    </interactant>
    <interactant intactId="EBI-12015604">
        <id>Q8N2M4</id>
        <label>TMEM86A</label>
    </interactant>
    <organismsDiffer>false</organismsDiffer>
    <experiments>3</experiments>
</comment>
<comment type="interaction">
    <interactant intactId="EBI-7797864">
        <id>P11912</id>
    </interactant>
    <interactant intactId="EBI-2548832">
        <id>Q8N661</id>
        <label>TMEM86B</label>
    </interactant>
    <organismsDiffer>false</organismsDiffer>
    <experiments>3</experiments>
</comment>
<comment type="interaction">
    <interactant intactId="EBI-7797864">
        <id>P11912</id>
    </interactant>
    <interactant intactId="EBI-11724433">
        <id>Q6ZT21</id>
        <label>TMPPE</label>
    </interactant>
    <organismsDiffer>false</organismsDiffer>
    <experiments>3</experiments>
</comment>
<comment type="interaction">
    <interactant intactId="EBI-7797864">
        <id>P11912</id>
    </interactant>
    <interactant intactId="EBI-717441">
        <id>O14798</id>
        <label>TNFRSF10C</label>
    </interactant>
    <organismsDiffer>false</organismsDiffer>
    <experiments>3</experiments>
</comment>
<comment type="interaction">
    <interactant intactId="EBI-7797864">
        <id>P11912</id>
    </interactant>
    <interactant intactId="EBI-11996766">
        <id>Q8N609</id>
        <label>TRAM1L1</label>
    </interactant>
    <organismsDiffer>false</organismsDiffer>
    <experiments>3</experiments>
</comment>
<comment type="interaction">
    <interactant intactId="EBI-7797864">
        <id>P11912</id>
    </interactant>
    <interactant intactId="EBI-12003468">
        <id>A0AVG3</id>
        <label>TSNARE1</label>
    </interactant>
    <organismsDiffer>false</organismsDiffer>
    <experiments>3</experiments>
</comment>
<comment type="interaction">
    <interactant intactId="EBI-7797864">
        <id>P11912</id>
    </interactant>
    <interactant intactId="EBI-3914288">
        <id>O60636</id>
        <label>TSPAN2</label>
    </interactant>
    <organismsDiffer>false</organismsDiffer>
    <experiments>3</experiments>
</comment>
<comment type="interaction">
    <interactant intactId="EBI-7797864">
        <id>P11912</id>
    </interactant>
    <interactant intactId="EBI-12195249">
        <id>Q5TGU0</id>
        <label>TSPO2</label>
    </interactant>
    <organismsDiffer>false</organismsDiffer>
    <experiments>3</experiments>
</comment>
<comment type="interaction">
    <interactant intactId="EBI-7797864">
        <id>P11912</id>
    </interactant>
    <interactant intactId="EBI-11988865">
        <id>A5PKU2</id>
        <label>TUSC5</label>
    </interactant>
    <organismsDiffer>false</organismsDiffer>
    <experiments>3</experiments>
</comment>
<comment type="interaction">
    <interactant intactId="EBI-7797864">
        <id>P11912</id>
    </interactant>
    <interactant intactId="EBI-988826">
        <id>Q9Y385</id>
        <label>UBE2J1</label>
    </interactant>
    <organismsDiffer>false</organismsDiffer>
    <experiments>3</experiments>
</comment>
<comment type="interaction">
    <interactant intactId="EBI-7797864">
        <id>P11912</id>
    </interactant>
    <interactant intactId="EBI-2819725">
        <id>Q9Y5Z9</id>
        <label>UBIAD1</label>
    </interactant>
    <organismsDiffer>false</organismsDiffer>
    <experiments>3</experiments>
</comment>
<comment type="interaction">
    <interactant intactId="EBI-7797864">
        <id>P11912</id>
    </interactant>
    <interactant intactId="EBI-4401271">
        <id>Q9H1C4</id>
        <label>UNC93B1</label>
    </interactant>
    <organismsDiffer>false</organismsDiffer>
    <experiments>3</experiments>
</comment>
<comment type="interaction">
    <interactant intactId="EBI-7797864">
        <id>P11912</id>
    </interactant>
    <interactant intactId="EBI-722343">
        <id>Q15836</id>
        <label>VAMP3</label>
    </interactant>
    <organismsDiffer>false</organismsDiffer>
    <experiments>3</experiments>
</comment>
<comment type="interaction">
    <interactant intactId="EBI-7797864">
        <id>P11912</id>
    </interactant>
    <interactant intactId="EBI-1059156">
        <id>Q9P0L0</id>
        <label>VAPA</label>
    </interactant>
    <organismsDiffer>false</organismsDiffer>
    <experiments>3</experiments>
</comment>
<comment type="interaction">
    <interactant intactId="EBI-7797864">
        <id>P11912</id>
    </interactant>
    <interactant intactId="EBI-1188298">
        <id>O95292</id>
        <label>VAPB</label>
    </interactant>
    <organismsDiffer>false</organismsDiffer>
    <experiments>3</experiments>
</comment>
<comment type="interaction">
    <interactant intactId="EBI-7797864">
        <id>P11912</id>
    </interactant>
    <interactant intactId="EBI-723716">
        <id>Q9UEU0</id>
        <label>VTI1B</label>
    </interactant>
    <organismsDiffer>false</organismsDiffer>
    <experiments>3</experiments>
</comment>
<comment type="interaction">
    <interactant intactId="EBI-7797864">
        <id>P11912</id>
    </interactant>
    <interactant intactId="EBI-723529">
        <id>Q14508</id>
        <label>WFDC2</label>
    </interactant>
    <organismsDiffer>false</organismsDiffer>
    <experiments>3</experiments>
</comment>
<comment type="interaction">
    <interactant intactId="EBI-7797864">
        <id>P11912</id>
    </interactant>
    <interactant intactId="EBI-720609">
        <id>O76024</id>
        <label>WFS1</label>
    </interactant>
    <organismsDiffer>false</organismsDiffer>
    <experiments>3</experiments>
</comment>
<comment type="interaction">
    <interactant intactId="EBI-7797864">
        <id>P11912</id>
    </interactant>
    <interactant intactId="EBI-2799703">
        <id>O95070</id>
        <label>YIF1A</label>
    </interactant>
    <organismsDiffer>false</organismsDiffer>
    <experiments>3</experiments>
</comment>
<comment type="interaction">
    <interactant intactId="EBI-7797864">
        <id>P11912</id>
    </interactant>
    <interactant intactId="EBI-751253">
        <id>Q9BSR8</id>
        <label>YIPF4</label>
    </interactant>
    <organismsDiffer>false</organismsDiffer>
    <experiments>3</experiments>
</comment>
<comment type="interaction">
    <interactant intactId="EBI-7797864">
        <id>P11912</id>
    </interactant>
    <interactant intactId="EBI-751210">
        <id>Q96EC8</id>
        <label>YIPF6</label>
    </interactant>
    <organismsDiffer>false</organismsDiffer>
    <experiments>3</experiments>
</comment>
<comment type="interaction">
    <interactant intactId="EBI-7797864">
        <id>P11912</id>
    </interactant>
    <interactant intactId="EBI-12837904">
        <id>Q96MV8</id>
        <label>ZDHHC15</label>
    </interactant>
    <organismsDiffer>false</organismsDiffer>
    <experiments>3</experiments>
</comment>
<comment type="interaction">
    <interactant intactId="EBI-7797864">
        <id>P11912</id>
    </interactant>
    <interactant intactId="EBI-10268111">
        <id>Q8N966</id>
        <label>ZDHHC22</label>
    </interactant>
    <organismsDiffer>false</organismsDiffer>
    <experiments>3</experiments>
</comment>
<comment type="subcellular location">
    <subcellularLocation>
        <location>Cell membrane</location>
        <topology>Single-pass type I membrane protein</topology>
    </subcellularLocation>
    <text evidence="1">Following antigen binding, the BCR has been shown to translocate from detergent-soluble regions of the cell membrane to lipid rafts although signal transduction through the complex can also occur outside lipid rafts.</text>
</comment>
<comment type="alternative products">
    <event type="alternative splicing"/>
    <isoform>
        <id>P11912-1</id>
        <name>1</name>
        <name>Long</name>
        <sequence type="displayed"/>
    </isoform>
    <isoform>
        <id>P11912-2</id>
        <name>2</name>
        <name>Short</name>
        <sequence type="described" ref="VSP_002476"/>
    </isoform>
</comment>
<comment type="tissue specificity">
    <text>B-cells.</text>
</comment>
<comment type="domain">
    <text evidence="10">The transmembrane helices of CD79A and CD79B chains and two IgM heavy chains assembly in a four-helix bundle structure that appears to be conserved among different BCR isotypes.</text>
</comment>
<comment type="PTM">
    <text evidence="7 8">Phosphorylated on tyrosine, serine and threonine residues upon B-cell activation. Phosphorylation of tyrosine residues by Src-family kinases is an early and essential feature of the BCR signaling cascade. The phosphorylated tyrosines serve as docking sites for SH2-domain containing kinases, leading to their activation which in turn leads to phosphorylation of downstream targets. Phosphorylated by LYN. Phosphorylation of serine and threonine residues may prevent subsequent tyrosine phosphorylation.</text>
</comment>
<comment type="PTM">
    <text evidence="1">Arginine methylation in the ITAM domain may interfere with the binding of SYK. It promotes signals leading to B-cell differentiation (By similarity).</text>
</comment>
<comment type="disease" evidence="6 9">
    <disease id="DI-02873">
        <name>Agammaglobulinemia 3, autosomal recessive</name>
        <acronym>AGM3</acronym>
        <description>A primary immunodeficiency characterized by profoundly low or absent serum antibodies and low or absent circulating B-cells due to an early block of B-cell development. Affected individuals develop severe infections in the first years of life.</description>
        <dbReference type="MIM" id="613501"/>
    </disease>
    <text>The disease is caused by variants affecting the gene represented in this entry. Two different mutations, one at the splice donor site of intron 2 and the other at the splice acceptor site for exon 3, have been identified. Both mutations give rise to a truncated protein.</text>
</comment>
<comment type="online information" name="CD79Abase">
    <link uri="https://databases.lovd.nl/shared/genes/CD79A"/>
    <text>CD79A mutation db</text>
</comment>
<feature type="signal peptide" evidence="11">
    <location>
        <begin position="1"/>
        <end position="32"/>
    </location>
</feature>
<feature type="chain" id="PRO_0000014558" description="B-cell antigen receptor complex-associated protein alpha chain">
    <location>
        <begin position="33"/>
        <end position="226"/>
    </location>
</feature>
<feature type="topological domain" description="Extracellular" evidence="3">
    <location>
        <begin position="33"/>
        <end position="143"/>
    </location>
</feature>
<feature type="transmembrane region" description="Helical" evidence="3">
    <location>
        <begin position="144"/>
        <end position="165"/>
    </location>
</feature>
<feature type="topological domain" description="Cytoplasmic" evidence="3">
    <location>
        <begin position="166"/>
        <end position="226"/>
    </location>
</feature>
<feature type="domain" description="Ig-like C2-type">
    <location>
        <begin position="33"/>
        <end position="116"/>
    </location>
</feature>
<feature type="domain" description="ITAM" evidence="5">
    <location>
        <begin position="177"/>
        <end position="205"/>
    </location>
</feature>
<feature type="site" description="Required for binding to BLNK" evidence="1">
    <location>
        <position position="210"/>
    </location>
</feature>
<feature type="modified residue" description="Phosphotyrosine; by SRC-type Tyr-kinases" evidence="2 5">
    <location>
        <position position="188"/>
    </location>
</feature>
<feature type="modified residue" description="Phosphotyrosine; by SRC-type Tyr-kinases" evidence="2 5">
    <location>
        <position position="199"/>
    </location>
</feature>
<feature type="modified residue" description="Asymmetric dimethylarginine; by PRMT1" evidence="2">
    <location>
        <position position="204"/>
    </location>
</feature>
<feature type="modified residue" description="Phosphotyrosine; by Tyr-kinases" evidence="2 5">
    <location>
        <position position="210"/>
    </location>
</feature>
<feature type="glycosylation site" description="N-linked (GlcNAc...) asparagine" evidence="3 10 17">
    <location>
        <position position="57"/>
    </location>
</feature>
<feature type="glycosylation site" description="N-linked (GlcNAc...) asparagine" evidence="3 10 17">
    <location>
        <position position="63"/>
    </location>
</feature>
<feature type="glycosylation site" description="N-linked (GlcNAc...) asparagine" evidence="3 10 17">
    <location>
        <position position="73"/>
    </location>
</feature>
<feature type="glycosylation site" description="N-linked (GlcNAc...) asparagine" evidence="3 10 17">
    <location>
        <position position="88"/>
    </location>
</feature>
<feature type="glycosylation site" description="N-linked (GlcNAc...) asparagine" evidence="3 10 17">
    <location>
        <position position="97"/>
    </location>
</feature>
<feature type="glycosylation site" description="N-linked (GlcNAc...) asparagine" evidence="3 10 17">
    <location>
        <position position="112"/>
    </location>
</feature>
<feature type="disulfide bond" evidence="4 10 17">
    <location>
        <begin position="54"/>
        <end position="106"/>
    </location>
</feature>
<feature type="disulfide bond" description="Interchain (with C-136 in beta chain)" evidence="4 10 17">
    <location>
        <position position="119"/>
    </location>
</feature>
<feature type="splice variant" id="VSP_002476" description="In isoform 2." evidence="14 15">
    <original>GTLIIQNVNKSHGGIYVCRVQEGNESYQQSCGTYLRVRQ</original>
    <variation>E</variation>
    <location>
        <begin position="89"/>
        <end position="127"/>
    </location>
</feature>
<feature type="mutagenesis site" description="Blocks IgM BCR assembly." evidence="10">
    <original>L</original>
    <variation>W</variation>
    <location>
        <position position="152"/>
    </location>
</feature>
<feature type="mutagenesis site" description="Blocks IgM BCR assembly." evidence="10">
    <original>A</original>
    <variation>W</variation>
    <location>
        <position position="156"/>
    </location>
</feature>
<feature type="mutagenesis site" description="Increased phosphorylation of Y-188; when associated with A-203 and V-209." evidence="8">
    <original>S</original>
    <variation>A</variation>
    <location>
        <position position="197"/>
    </location>
</feature>
<feature type="mutagenesis site" description="Increased phosphorylation of Y-188; when associated with A-197 and V-209." evidence="8">
    <original>S</original>
    <variation>A</variation>
    <location>
        <position position="203"/>
    </location>
</feature>
<feature type="mutagenesis site" description="Increased phosphorylation of Y-188; when associated with A-197 and A-203." evidence="8">
    <original>T</original>
    <variation>V</variation>
    <location>
        <position position="209"/>
    </location>
</feature>
<feature type="sequence conflict" description="In Ref. 10; BAD97091." evidence="16" ref="10">
    <original>G</original>
    <variation>V</variation>
    <location>
        <position position="47"/>
    </location>
</feature>
<feature type="sequence conflict" description="In Ref. 3; AAA60270." evidence="16" ref="3">
    <original>V</original>
    <variation>I</variation>
    <location>
        <position position="69"/>
    </location>
</feature>
<feature type="sequence conflict" description="In Ref. 10; BAD97091." evidence="16" ref="10">
    <original>E</original>
    <variation>G</variation>
    <location>
        <position position="189"/>
    </location>
</feature>
<feature type="helix" evidence="18">
    <location>
        <begin position="34"/>
        <end position="36"/>
    </location>
</feature>
<feature type="strand" evidence="18">
    <location>
        <begin position="40"/>
        <end position="44"/>
    </location>
</feature>
<feature type="strand" evidence="18">
    <location>
        <begin position="50"/>
        <end position="52"/>
    </location>
</feature>
<feature type="strand" evidence="18">
    <location>
        <begin position="63"/>
        <end position="69"/>
    </location>
</feature>
<feature type="strand" evidence="18">
    <location>
        <begin position="71"/>
        <end position="74"/>
    </location>
</feature>
<feature type="strand" evidence="18">
    <location>
        <begin position="79"/>
        <end position="83"/>
    </location>
</feature>
<feature type="helix" evidence="19">
    <location>
        <begin position="87"/>
        <end position="89"/>
    </location>
</feature>
<feature type="strand" evidence="18">
    <location>
        <begin position="91"/>
        <end position="93"/>
    </location>
</feature>
<feature type="helix" evidence="19">
    <location>
        <begin position="98"/>
        <end position="100"/>
    </location>
</feature>
<feature type="strand" evidence="18">
    <location>
        <begin position="102"/>
        <end position="109"/>
    </location>
</feature>
<feature type="strand" evidence="18">
    <location>
        <begin position="122"/>
        <end position="125"/>
    </location>
</feature>
<feature type="strand" evidence="18">
    <location>
        <begin position="134"/>
        <end position="136"/>
    </location>
</feature>
<feature type="strand" evidence="18">
    <location>
        <begin position="138"/>
        <end position="141"/>
    </location>
</feature>
<feature type="helix" evidence="18">
    <location>
        <begin position="142"/>
        <end position="167"/>
    </location>
</feature>
<dbReference type="EMBL" id="S46706">
    <property type="protein sequence ID" value="AAB23558.1"/>
    <property type="molecule type" value="mRNA"/>
</dbReference>
<dbReference type="EMBL" id="M80462">
    <property type="protein sequence ID" value="AAA59556.1"/>
    <property type="molecule type" value="mRNA"/>
</dbReference>
<dbReference type="EMBL" id="M74721">
    <property type="protein sequence ID" value="AAA60270.1"/>
    <property type="molecule type" value="mRNA"/>
</dbReference>
<dbReference type="EMBL" id="S75217">
    <property type="protein sequence ID" value="AAB20812.1"/>
    <property type="molecule type" value="mRNA"/>
</dbReference>
<dbReference type="EMBL" id="M86921">
    <property type="protein sequence ID" value="AAA59557.1"/>
    <property type="molecule type" value="mRNA"/>
</dbReference>
<dbReference type="EMBL" id="U05259">
    <property type="protein sequence ID" value="AAA20495.1"/>
    <property type="molecule type" value="Genomic_DNA"/>
</dbReference>
<dbReference type="EMBL" id="S79248">
    <property type="protein sequence ID" value="AAC60653.1"/>
    <property type="molecule type" value="mRNA"/>
</dbReference>
<dbReference type="EMBL" id="X83540">
    <property type="protein sequence ID" value="CAA58523.1"/>
    <property type="molecule type" value="mRNA"/>
</dbReference>
<dbReference type="EMBL" id="AK223371">
    <property type="protein sequence ID" value="BAD97091.1"/>
    <property type="molecule type" value="mRNA"/>
</dbReference>
<dbReference type="EMBL" id="X13451">
    <property type="protein sequence ID" value="CAA31802.1"/>
    <property type="status" value="ALT_SEQ"/>
    <property type="molecule type" value="mRNA"/>
</dbReference>
<dbReference type="CCDS" id="CCDS12589.1">
    <molecule id="P11912-1"/>
</dbReference>
<dbReference type="CCDS" id="CCDS46088.1">
    <molecule id="P11912-2"/>
</dbReference>
<dbReference type="PIR" id="I54539">
    <property type="entry name" value="A46477"/>
</dbReference>
<dbReference type="PIR" id="S12504">
    <property type="entry name" value="S12504"/>
</dbReference>
<dbReference type="RefSeq" id="NP_001774.1">
    <molecule id="P11912-1"/>
    <property type="nucleotide sequence ID" value="NM_001783.4"/>
</dbReference>
<dbReference type="RefSeq" id="NP_067612.1">
    <molecule id="P11912-2"/>
    <property type="nucleotide sequence ID" value="NM_021601.4"/>
</dbReference>
<dbReference type="PDB" id="1CV9">
    <property type="method" value="NMR"/>
    <property type="chains" value="A=184-195"/>
</dbReference>
<dbReference type="PDB" id="7WSO">
    <property type="method" value="EM"/>
    <property type="resolution" value="3.03 A"/>
    <property type="chains" value="A=33-169"/>
</dbReference>
<dbReference type="PDB" id="7WSP">
    <property type="method" value="EM"/>
    <property type="resolution" value="4.09 A"/>
    <property type="chains" value="A=33-169"/>
</dbReference>
<dbReference type="PDB" id="7XQ8">
    <property type="method" value="EM"/>
    <property type="resolution" value="3.30 A"/>
    <property type="chains" value="A=1-226"/>
</dbReference>
<dbReference type="PDB" id="7XT6">
    <property type="method" value="EM"/>
    <property type="resolution" value="3.63 A"/>
    <property type="chains" value="A=33-169"/>
</dbReference>
<dbReference type="PDBsum" id="1CV9"/>
<dbReference type="PDBsum" id="7WSO"/>
<dbReference type="PDBsum" id="7WSP"/>
<dbReference type="PDBsum" id="7XQ8"/>
<dbReference type="PDBsum" id="7XT6"/>
<dbReference type="BMRB" id="P11912"/>
<dbReference type="EMDB" id="EMD-32762"/>
<dbReference type="EMDB" id="EMD-32763"/>
<dbReference type="EMDB" id="EMD-33390"/>
<dbReference type="EMDB" id="EMD-33440"/>
<dbReference type="SMR" id="P11912"/>
<dbReference type="BioGRID" id="107411">
    <property type="interactions" value="251"/>
</dbReference>
<dbReference type="CORUM" id="P11912"/>
<dbReference type="ELM" id="P11912"/>
<dbReference type="FunCoup" id="P11912">
    <property type="interactions" value="335"/>
</dbReference>
<dbReference type="IntAct" id="P11912">
    <property type="interactions" value="224"/>
</dbReference>
<dbReference type="MINT" id="P11912"/>
<dbReference type="STRING" id="9606.ENSP00000221972"/>
<dbReference type="GlyConnect" id="1028">
    <property type="glycosylation" value="1 N-Linked glycan (1 site)"/>
</dbReference>
<dbReference type="GlyCosmos" id="P11912">
    <property type="glycosylation" value="6 sites, 1 glycan"/>
</dbReference>
<dbReference type="GlyGen" id="P11912">
    <property type="glycosylation" value="9 sites, 4 N-linked glycans (1 site)"/>
</dbReference>
<dbReference type="iPTMnet" id="P11912"/>
<dbReference type="PhosphoSitePlus" id="P11912"/>
<dbReference type="BioMuta" id="CD79A"/>
<dbReference type="DMDM" id="547896"/>
<dbReference type="CPTAC" id="CPTAC-1178"/>
<dbReference type="MassIVE" id="P11912"/>
<dbReference type="PaxDb" id="9606-ENSP00000221972"/>
<dbReference type="PeptideAtlas" id="P11912"/>
<dbReference type="ProteomicsDB" id="52811">
    <molecule id="P11912-1"/>
</dbReference>
<dbReference type="ProteomicsDB" id="52812">
    <molecule id="P11912-2"/>
</dbReference>
<dbReference type="Antibodypedia" id="2990">
    <property type="antibodies" value="2297 antibodies from 48 providers"/>
</dbReference>
<dbReference type="DNASU" id="973"/>
<dbReference type="Ensembl" id="ENST00000221972.8">
    <molecule id="P11912-1"/>
    <property type="protein sequence ID" value="ENSP00000221972.3"/>
    <property type="gene ID" value="ENSG00000105369.10"/>
</dbReference>
<dbReference type="Ensembl" id="ENST00000444740.2">
    <molecule id="P11912-2"/>
    <property type="protein sequence ID" value="ENSP00000400605.1"/>
    <property type="gene ID" value="ENSG00000105369.10"/>
</dbReference>
<dbReference type="GeneID" id="973"/>
<dbReference type="KEGG" id="hsa:973"/>
<dbReference type="MANE-Select" id="ENST00000221972.8">
    <property type="protein sequence ID" value="ENSP00000221972.3"/>
    <property type="RefSeq nucleotide sequence ID" value="NM_001783.4"/>
    <property type="RefSeq protein sequence ID" value="NP_001774.1"/>
</dbReference>
<dbReference type="UCSC" id="uc002oru.4">
    <molecule id="P11912-1"/>
    <property type="organism name" value="human"/>
</dbReference>
<dbReference type="AGR" id="HGNC:1698"/>
<dbReference type="CTD" id="973"/>
<dbReference type="DisGeNET" id="973"/>
<dbReference type="GeneCards" id="CD79A"/>
<dbReference type="HGNC" id="HGNC:1698">
    <property type="gene designation" value="CD79A"/>
</dbReference>
<dbReference type="HPA" id="ENSG00000105369">
    <property type="expression patterns" value="Group enriched (intestine, lymphoid tissue)"/>
</dbReference>
<dbReference type="MalaCards" id="CD79A"/>
<dbReference type="MIM" id="112205">
    <property type="type" value="gene"/>
</dbReference>
<dbReference type="MIM" id="613501">
    <property type="type" value="phenotype"/>
</dbReference>
<dbReference type="neXtProt" id="NX_P11912"/>
<dbReference type="OpenTargets" id="ENSG00000105369"/>
<dbReference type="Orphanet" id="33110">
    <property type="disease" value="Autosomal non-syndromic agammaglobulinemia"/>
</dbReference>
<dbReference type="PharmGKB" id="PA26237"/>
<dbReference type="VEuPathDB" id="HostDB:ENSG00000105369"/>
<dbReference type="eggNOG" id="ENOG502S1DI">
    <property type="taxonomic scope" value="Eukaryota"/>
</dbReference>
<dbReference type="GeneTree" id="ENSGT00940000154363"/>
<dbReference type="HOGENOM" id="CLU_106774_0_0_1"/>
<dbReference type="InParanoid" id="P11912"/>
<dbReference type="OMA" id="RWQNEKF"/>
<dbReference type="OrthoDB" id="8915525at2759"/>
<dbReference type="PAN-GO" id="P11912">
    <property type="GO annotations" value="4 GO annotations based on evolutionary models"/>
</dbReference>
<dbReference type="PhylomeDB" id="P11912"/>
<dbReference type="TreeFam" id="TF336032"/>
<dbReference type="PathwayCommons" id="P11912"/>
<dbReference type="Reactome" id="R-HSA-5690714">
    <property type="pathway name" value="CD22 mediated BCR regulation"/>
</dbReference>
<dbReference type="Reactome" id="R-HSA-9679191">
    <property type="pathway name" value="Potential therapeutics for SARS"/>
</dbReference>
<dbReference type="Reactome" id="R-HSA-983695">
    <property type="pathway name" value="Antigen activates B Cell Receptor (BCR) leading to generation of second messengers"/>
</dbReference>
<dbReference type="SignaLink" id="P11912"/>
<dbReference type="SIGNOR" id="P11912"/>
<dbReference type="BioGRID-ORCS" id="973">
    <property type="hits" value="23 hits in 1151 CRISPR screens"/>
</dbReference>
<dbReference type="EvolutionaryTrace" id="P11912"/>
<dbReference type="GeneWiki" id="CD79A"/>
<dbReference type="GenomeRNAi" id="973"/>
<dbReference type="Pharos" id="P11912">
    <property type="development level" value="Tbio"/>
</dbReference>
<dbReference type="PRO" id="PR:P11912"/>
<dbReference type="Proteomes" id="UP000005640">
    <property type="component" value="Chromosome 19"/>
</dbReference>
<dbReference type="RNAct" id="P11912">
    <property type="molecule type" value="protein"/>
</dbReference>
<dbReference type="Bgee" id="ENSG00000105369">
    <property type="expression patterns" value="Expressed in spleen and 140 other cell types or tissues"/>
</dbReference>
<dbReference type="ExpressionAtlas" id="P11912">
    <property type="expression patterns" value="baseline and differential"/>
</dbReference>
<dbReference type="GO" id="GO:0019815">
    <property type="term" value="C:B cell receptor complex"/>
    <property type="evidence" value="ECO:0000314"/>
    <property type="project" value="UniProt"/>
</dbReference>
<dbReference type="GO" id="GO:0009897">
    <property type="term" value="C:external side of plasma membrane"/>
    <property type="evidence" value="ECO:0000250"/>
    <property type="project" value="UniProtKB"/>
</dbReference>
<dbReference type="GO" id="GO:0071755">
    <property type="term" value="C:IgM B cell receptor complex"/>
    <property type="evidence" value="ECO:0000314"/>
    <property type="project" value="UniProtKB"/>
</dbReference>
<dbReference type="GO" id="GO:0045121">
    <property type="term" value="C:membrane raft"/>
    <property type="evidence" value="ECO:0000250"/>
    <property type="project" value="UniProtKB"/>
</dbReference>
<dbReference type="GO" id="GO:0005771">
    <property type="term" value="C:multivesicular body"/>
    <property type="evidence" value="ECO:0000250"/>
    <property type="project" value="UniProtKB"/>
</dbReference>
<dbReference type="GO" id="GO:0005886">
    <property type="term" value="C:plasma membrane"/>
    <property type="evidence" value="ECO:0000304"/>
    <property type="project" value="Reactome"/>
</dbReference>
<dbReference type="GO" id="GO:0042802">
    <property type="term" value="F:identical protein binding"/>
    <property type="evidence" value="ECO:0000314"/>
    <property type="project" value="CAFA"/>
</dbReference>
<dbReference type="GO" id="GO:0004888">
    <property type="term" value="F:transmembrane signaling receptor activity"/>
    <property type="evidence" value="ECO:0007669"/>
    <property type="project" value="Ensembl"/>
</dbReference>
<dbReference type="GO" id="GO:0002250">
    <property type="term" value="P:adaptive immune response"/>
    <property type="evidence" value="ECO:0007669"/>
    <property type="project" value="UniProtKB-KW"/>
</dbReference>
<dbReference type="GO" id="GO:0042113">
    <property type="term" value="P:B cell activation"/>
    <property type="evidence" value="ECO:0000250"/>
    <property type="project" value="UniProtKB"/>
</dbReference>
<dbReference type="GO" id="GO:0030183">
    <property type="term" value="P:B cell differentiation"/>
    <property type="evidence" value="ECO:0000250"/>
    <property type="project" value="UniProtKB"/>
</dbReference>
<dbReference type="GO" id="GO:0042100">
    <property type="term" value="P:B cell proliferation"/>
    <property type="evidence" value="ECO:0000250"/>
    <property type="project" value="UniProtKB"/>
</dbReference>
<dbReference type="GO" id="GO:0050853">
    <property type="term" value="P:B cell receptor signaling pathway"/>
    <property type="evidence" value="ECO:0000250"/>
    <property type="project" value="UniProtKB"/>
</dbReference>
<dbReference type="CDD" id="cd00096">
    <property type="entry name" value="Ig"/>
    <property type="match status" value="1"/>
</dbReference>
<dbReference type="DisProt" id="DP01486"/>
<dbReference type="FunFam" id="2.60.40.10:FF:001852">
    <property type="entry name" value="B-cell antigen receptor complex-associated protein alpha chain"/>
    <property type="match status" value="1"/>
</dbReference>
<dbReference type="Gene3D" id="2.60.40.10">
    <property type="entry name" value="Immunoglobulins"/>
    <property type="match status" value="1"/>
</dbReference>
<dbReference type="InterPro" id="IPR007110">
    <property type="entry name" value="Ig-like_dom"/>
</dbReference>
<dbReference type="InterPro" id="IPR036179">
    <property type="entry name" value="Ig-like_dom_sf"/>
</dbReference>
<dbReference type="InterPro" id="IPR013783">
    <property type="entry name" value="Ig-like_fold"/>
</dbReference>
<dbReference type="InterPro" id="IPR003599">
    <property type="entry name" value="Ig_sub"/>
</dbReference>
<dbReference type="InterPro" id="IPR003598">
    <property type="entry name" value="Ig_sub2"/>
</dbReference>
<dbReference type="InterPro" id="IPR003110">
    <property type="entry name" value="Phos_immunorcpt_sig_ITAM"/>
</dbReference>
<dbReference type="PANTHER" id="PTHR14334">
    <property type="entry name" value="B-CELL ANTIGEN RECEPTOR COMPLEX-ASSOCIATED PROTEIN"/>
    <property type="match status" value="1"/>
</dbReference>
<dbReference type="PANTHER" id="PTHR14334:SF1">
    <property type="entry name" value="B-CELL ANTIGEN RECEPTOR COMPLEX-ASSOCIATED PROTEIN ALPHA CHAIN"/>
    <property type="match status" value="1"/>
</dbReference>
<dbReference type="Pfam" id="PF13927">
    <property type="entry name" value="Ig_3"/>
    <property type="match status" value="1"/>
</dbReference>
<dbReference type="Pfam" id="PF02189">
    <property type="entry name" value="ITAM"/>
    <property type="match status" value="1"/>
</dbReference>
<dbReference type="SMART" id="SM00409">
    <property type="entry name" value="IG"/>
    <property type="match status" value="1"/>
</dbReference>
<dbReference type="SMART" id="SM00408">
    <property type="entry name" value="IGc2"/>
    <property type="match status" value="1"/>
</dbReference>
<dbReference type="SMART" id="SM00077">
    <property type="entry name" value="ITAM"/>
    <property type="match status" value="1"/>
</dbReference>
<dbReference type="SUPFAM" id="SSF48726">
    <property type="entry name" value="Immunoglobulin"/>
    <property type="match status" value="1"/>
</dbReference>
<dbReference type="PROSITE" id="PS50835">
    <property type="entry name" value="IG_LIKE"/>
    <property type="match status" value="1"/>
</dbReference>
<dbReference type="PROSITE" id="PS51055">
    <property type="entry name" value="ITAM_1"/>
    <property type="match status" value="1"/>
</dbReference>
<keyword id="KW-0002">3D-structure</keyword>
<keyword id="KW-1064">Adaptive immunity</keyword>
<keyword id="KW-0025">Alternative splicing</keyword>
<keyword id="KW-1003">Cell membrane</keyword>
<keyword id="KW-0903">Direct protein sequencing</keyword>
<keyword id="KW-1015">Disulfide bond</keyword>
<keyword id="KW-0325">Glycoprotein</keyword>
<keyword id="KW-0391">Immunity</keyword>
<keyword id="KW-0393">Immunoglobulin domain</keyword>
<keyword id="KW-0472">Membrane</keyword>
<keyword id="KW-0488">Methylation</keyword>
<keyword id="KW-0597">Phosphoprotein</keyword>
<keyword id="KW-1267">Proteomics identification</keyword>
<keyword id="KW-0675">Receptor</keyword>
<keyword id="KW-1185">Reference proteome</keyword>
<keyword id="KW-0732">Signal</keyword>
<keyword id="KW-0812">Transmembrane</keyword>
<keyword id="KW-1133">Transmembrane helix</keyword>
<gene>
    <name type="primary">CD79A</name>
    <name type="synonym">IGA</name>
    <name type="synonym">MB1</name>
</gene>
<accession>P11912</accession>
<accession>A0N775</accession>
<accession>Q53FB8</accession>
<name>CD79A_HUMAN</name>
<protein>
    <recommendedName>
        <fullName>B-cell antigen receptor complex-associated protein alpha chain</fullName>
    </recommendedName>
    <alternativeName>
        <fullName>Ig-alpha</fullName>
    </alternativeName>
    <alternativeName>
        <fullName>MB-1 membrane glycoprotein</fullName>
    </alternativeName>
    <alternativeName>
        <fullName>Membrane-bound immunoglobulin-associated protein</fullName>
    </alternativeName>
    <alternativeName>
        <fullName>Surface IgM-associated protein</fullName>
    </alternativeName>
    <cdAntigenName>CD79a</cdAntigenName>
</protein>
<reference key="1">
    <citation type="journal article" date="1992" name="Clin. Exp. Immunol.">
        <title>Structure and expression of the mb-1 transcript in human lymphoid cells.</title>
        <authorList>
            <person name="Leduc I."/>
            <person name="Preud'Homme J.L."/>
            <person name="Cogne M."/>
        </authorList>
    </citation>
    <scope>NUCLEOTIDE SEQUENCE [MRNA] (ISOFORM 1)</scope>
</reference>
<reference key="2">
    <citation type="journal article" date="1992" name="Eur. J. Immunol.">
        <title>Cloning and sequencing of the cDNA encoding the human homologue of the murine immunoglobulin-associated protein B29.</title>
        <authorList>
            <person name="Mueller B.S."/>
            <person name="Cooper L."/>
            <person name="Terhorst C."/>
        </authorList>
    </citation>
    <scope>NUCLEOTIDE SEQUENCE [MRNA] (ISOFORM 1)</scope>
    <source>
        <tissue>Tonsil</tissue>
    </source>
</reference>
<reference key="3">
    <citation type="journal article" date="1992" name="Immunogenetics">
        <title>Molecular cloning of the Ig-alpha subunit of the human B-cell antigen receptor complex.</title>
        <authorList>
            <person name="Flaswinkel H."/>
            <person name="Reth M."/>
        </authorList>
    </citation>
    <scope>NUCLEOTIDE SEQUENCE [MRNA] (ISOFORM 1)</scope>
</reference>
<reference key="4">
    <citation type="journal article" date="1992" name="J. Immunol.">
        <title>Human mb-1 gene: complete cDNA sequence and its expression in B cells bearing membrane Ig of various isotypes.</title>
        <authorList>
            <person name="Yu L.M."/>
            <person name="Chang T.W."/>
        </authorList>
    </citation>
    <scope>NUCLEOTIDE SEQUENCE [MRNA] (ISOFORM 1)</scope>
</reference>
<reference key="5">
    <citation type="journal article" date="1992" name="J. Immunol.">
        <title>Molecular cloning and expression pattern of a human gene homologous to the murine mb-1 gene.</title>
        <authorList>
            <person name="Ha H.J."/>
            <person name="Kubagawa H."/>
            <person name="Burrows P.D."/>
        </authorList>
    </citation>
    <scope>NUCLEOTIDE SEQUENCE [GENOMIC DNA / MRNA] (ISOFORM 1)</scope>
</reference>
<reference key="6">
    <citation type="journal article" date="1994" name="Immunogenetics">
        <title>Chromosomal localization, genomic structure, and allelic polymorphism of the human CD79 alpha (Ig-alpha/mb-1) gene.</title>
        <authorList>
            <person name="Hashimoto S."/>
            <person name="Mohrenweiser H.W."/>
            <person name="Gregersen P.K."/>
            <person name="Chiorazzi N."/>
        </authorList>
    </citation>
    <scope>NUCLEOTIDE SEQUENCE [GENOMIC DNA] (ISOFORM 1)</scope>
</reference>
<reference key="7">
    <citation type="journal article" date="1994" name="J. Immunol.">
        <title>Structure, chromosomal localization, and methylation pattern of the human mb-1 gene.</title>
        <authorList>
            <person name="Ha H."/>
            <person name="Barnoski B.L."/>
            <person name="Sun L."/>
            <person name="Emanuel B.S."/>
            <person name="Burrows P.D."/>
        </authorList>
    </citation>
    <scope>NUCLEOTIDE SEQUENCE [GENOMIC DNA]</scope>
</reference>
<reference key="8">
    <citation type="journal article" date="1995" name="Mol. Immunol.">
        <title>Alternative splicing of CD79a (Ig-alpha/mb-1) and CD79b (Ig-beta/B29) RNA transcripts in human B cells.</title>
        <authorList>
            <person name="Hashimoto S."/>
            <person name="Chiorazzi N."/>
            <person name="Gregersen P.K."/>
        </authorList>
    </citation>
    <scope>NUCLEOTIDE SEQUENCE [MRNA] (ISOFORM 2)</scope>
</reference>
<reference key="9">
    <citation type="submission" date="1994-12" db="EMBL/GenBank/DDBJ databases">
        <authorList>
            <person name="Koyama M."/>
            <person name="Nakamura T."/>
        </authorList>
    </citation>
    <scope>NUCLEOTIDE SEQUENCE [MRNA] (ISOFORM 2)</scope>
</reference>
<reference key="10">
    <citation type="submission" date="2005-04" db="EMBL/GenBank/DDBJ databases">
        <authorList>
            <person name="Totoki Y."/>
            <person name="Toyoda A."/>
            <person name="Takeda T."/>
            <person name="Sakaki Y."/>
            <person name="Tanaka A."/>
            <person name="Yokoyama S."/>
        </authorList>
    </citation>
    <scope>NUCLEOTIDE SEQUENCE [LARGE SCALE MRNA] (ISOFORM 1)</scope>
    <source>
        <tissue>Small intestine</tissue>
    </source>
</reference>
<reference key="11">
    <citation type="journal article" date="1994" name="Mol. Immunol.">
        <title>Isolation and chemical characterization of the human B29 and mb-1 proteins of the B cell antigen receptor complex.</title>
        <authorList>
            <person name="Vasile S."/>
            <person name="Coligan J.E."/>
            <person name="Yoshida M."/>
            <person name="Seon B.K."/>
        </authorList>
    </citation>
    <scope>PROTEIN SEQUENCE OF 33-52</scope>
</reference>
<reference key="12">
    <citation type="journal article" date="1988" name="EMBO J.">
        <title>B lymphocyte lineage-restricted expression of mb-1, a gene with CD3-like structural properties.</title>
        <authorList>
            <person name="Sakaguchi N."/>
            <person name="Kashiwamura S."/>
            <person name="Kimoto M."/>
            <person name="Thalmann P."/>
            <person name="Melchers F."/>
        </authorList>
    </citation>
    <scope>PRELIMINARY NUCLEOTIDE SEQUENCE [MRNA] OF 190-226 (ISOFORM 1)</scope>
</reference>
<reference key="13">
    <citation type="journal article" date="1996" name="J. Biol. Chem.">
        <title>Cooperativity and segregation of function within the Ig-alpha/beta heterodimer of the B cell antigen receptor complex.</title>
        <authorList>
            <person name="Luisiri P."/>
            <person name="Lee Y.J."/>
            <person name="Eisfelder B.J."/>
            <person name="Clark M.R."/>
        </authorList>
    </citation>
    <scope>FUNCTION</scope>
</reference>
<reference key="14">
    <citation type="journal article" date="1997" name="Blood">
        <title>B-cell antigen receptor-induced apoptosis requires both Ig alpha and Ig beta.</title>
        <authorList>
            <person name="Tseng J."/>
            <person name="Eisfelder B.J."/>
            <person name="Clark M.R."/>
        </authorList>
    </citation>
    <scope>FUNCTION</scope>
</reference>
<reference key="15">
    <citation type="journal article" date="1999" name="J. Clin. Invest.">
        <title>Mutations in Igalpha (CD79a) result in a complete block in B-cell development.</title>
        <authorList>
            <person name="Minegishi Y."/>
            <person name="Coustan-Smith E."/>
            <person name="Rapalus L."/>
            <person name="Ersoy F."/>
            <person name="Campana D."/>
            <person name="Conley M.E."/>
        </authorList>
    </citation>
    <scope>INVOLVEMENT IN AGM3</scope>
</reference>
<reference key="16">
    <citation type="journal article" date="2000" name="Proc. Natl. Acad. Sci. U.S.A.">
        <title>The serine and threonine residues in the Ig-alpha cytoplasmic tail negatively regulate immunoreceptor tyrosine-based activation motif-mediated signal transduction.</title>
        <authorList>
            <person name="Mueller R."/>
            <person name="Wienands J."/>
            <person name="Reth M."/>
        </authorList>
    </citation>
    <scope>PHOSPHORYLATION</scope>
    <scope>MUTAGENESIS OF SER-197; SER-203 AND THR-209</scope>
</reference>
<reference key="17">
    <citation type="journal article" date="2002" name="Am. J. Med. Genet.">
        <title>Novel Igalpha (CD79a) gene mutation in a Turkish patient with B cell-deficient agammaglobulinemia.</title>
        <authorList>
            <person name="Wang Y."/>
            <person name="Kanegane H."/>
            <person name="Sanal O."/>
            <person name="Tezcan I."/>
            <person name="Ersoy F."/>
            <person name="Futatani T."/>
            <person name="Miyawaki T."/>
        </authorList>
    </citation>
    <scope>INVOLVEMENT IN AGM3</scope>
</reference>
<reference key="18">
    <citation type="journal article" date="2000" name="J. Biol. Chem.">
        <title>Substrate recognition by the Lyn protein-tyrosine kinase. NMR structure of the immunoreceptor tyrosine-based activation motif signaling region of the B cell antigen receptor.</title>
        <authorList>
            <person name="Gaul B.S."/>
            <person name="Harrison M.L."/>
            <person name="Geahlen R.L."/>
            <person name="Burton R.A."/>
            <person name="Post C.B."/>
        </authorList>
    </citation>
    <scope>STRUCTURE BY NMR OF 184-195</scope>
    <scope>PHOSPHORYLATION</scope>
    <scope>INTERACTION WITH LYN</scope>
</reference>
<reference key="19">
    <citation type="journal article" date="2022" name="Science">
        <title>Cryo-EM structure of the human IgM B cell receptor.</title>
        <authorList>
            <person name="Su Q."/>
            <person name="Chen M."/>
            <person name="Shi Y."/>
            <person name="Zhang X."/>
            <person name="Huang G."/>
            <person name="Huang B."/>
            <person name="Liu D."/>
            <person name="Liu Z."/>
            <person name="Shi Y."/>
        </authorList>
    </citation>
    <scope>STRUCTURE BY ELECTRON MICROSCOPY (3.30 ANGSTROMS) IN COMPLEX WITH CD79B AND IMMUNOGLOBULIN M</scope>
    <scope>DISULFIDE BOND</scope>
    <scope>SUBUNIT</scope>
    <scope>DOMAIN</scope>
    <scope>CHARACTERIZATION OF IGM BCR</scope>
    <scope>GLYCOSYLATION AT ASN-57; ASN-63; ASN-73; ASN-88; ASN-97 AND ASN-112</scope>
    <scope>MUTAGENESIS OF LEU-152 AND ALA-156</scope>
</reference>
<organism>
    <name type="scientific">Homo sapiens</name>
    <name type="common">Human</name>
    <dbReference type="NCBI Taxonomy" id="9606"/>
    <lineage>
        <taxon>Eukaryota</taxon>
        <taxon>Metazoa</taxon>
        <taxon>Chordata</taxon>
        <taxon>Craniata</taxon>
        <taxon>Vertebrata</taxon>
        <taxon>Euteleostomi</taxon>
        <taxon>Mammalia</taxon>
        <taxon>Eutheria</taxon>
        <taxon>Euarchontoglires</taxon>
        <taxon>Primates</taxon>
        <taxon>Haplorrhini</taxon>
        <taxon>Catarrhini</taxon>
        <taxon>Hominidae</taxon>
        <taxon>Homo</taxon>
    </lineage>
</organism>
<sequence>MPGGPGVLQALPATIFLLFLLSAVYLGPGCQALWMHKVPASLMVSLGEDAHFQCPHNSSNNANVTWWRVLHGNYTWPPEFLGPGEDPNGTLIIQNVNKSHGGIYVCRVQEGNESYQQSCGTYLRVRQPPPRPFLDMGEGTKNRIITAEGIILLFCAVVPGTLLLFRKRWQNEKLGLDAGDEYEDENLYEGLNLDDCSMYEDISRGLQGTYQDVGSLNIGDVQLEKP</sequence>
<evidence type="ECO:0000250" key="1"/>
<evidence type="ECO:0000250" key="2">
    <source>
        <dbReference type="UniProtKB" id="P11911"/>
    </source>
</evidence>
<evidence type="ECO:0000255" key="3"/>
<evidence type="ECO:0000255" key="4">
    <source>
        <dbReference type="PROSITE-ProRule" id="PRU00114"/>
    </source>
</evidence>
<evidence type="ECO:0000255" key="5">
    <source>
        <dbReference type="PROSITE-ProRule" id="PRU00379"/>
    </source>
</evidence>
<evidence type="ECO:0000269" key="6">
    <source>
    </source>
</evidence>
<evidence type="ECO:0000269" key="7">
    <source>
    </source>
</evidence>
<evidence type="ECO:0000269" key="8">
    <source>
    </source>
</evidence>
<evidence type="ECO:0000269" key="9">
    <source>
    </source>
</evidence>
<evidence type="ECO:0000269" key="10">
    <source>
    </source>
</evidence>
<evidence type="ECO:0000269" key="11">
    <source>
    </source>
</evidence>
<evidence type="ECO:0000269" key="12">
    <source>
    </source>
</evidence>
<evidence type="ECO:0000269" key="13">
    <source>
    </source>
</evidence>
<evidence type="ECO:0000303" key="14">
    <source>
    </source>
</evidence>
<evidence type="ECO:0000303" key="15">
    <source ref="9"/>
</evidence>
<evidence type="ECO:0000305" key="16"/>
<evidence type="ECO:0007744" key="17">
    <source>
        <dbReference type="PDB" id="7XQ8"/>
    </source>
</evidence>
<evidence type="ECO:0007829" key="18">
    <source>
        <dbReference type="PDB" id="7WSO"/>
    </source>
</evidence>
<evidence type="ECO:0007829" key="19">
    <source>
        <dbReference type="PDB" id="7XQ8"/>
    </source>
</evidence>